<comment type="function">
    <text evidence="1">One of several proteins that assist in the late maturation steps of the functional core of the 30S ribosomal subunit. Helps release RbfA from mature subunits. May play a role in the assembly of ribosomal proteins into the subunit. Circularly permuted GTPase that catalyzes slow GTP hydrolysis, GTPase activity is stimulated by the 30S ribosomal subunit.</text>
</comment>
<comment type="cofactor">
    <cofactor evidence="1">
        <name>Zn(2+)</name>
        <dbReference type="ChEBI" id="CHEBI:29105"/>
    </cofactor>
    <text evidence="1">Binds 1 zinc ion per subunit.</text>
</comment>
<comment type="subunit">
    <text evidence="1">Monomer. Associates with 30S ribosomal subunit, binds 16S rRNA.</text>
</comment>
<comment type="subcellular location">
    <subcellularLocation>
        <location evidence="1">Cytoplasm</location>
    </subcellularLocation>
</comment>
<comment type="similarity">
    <text evidence="1">Belongs to the TRAFAC class YlqF/YawG GTPase family. RsgA subfamily.</text>
</comment>
<accession>Q21H92</accession>
<evidence type="ECO:0000255" key="1">
    <source>
        <dbReference type="HAMAP-Rule" id="MF_01820"/>
    </source>
</evidence>
<evidence type="ECO:0000255" key="2">
    <source>
        <dbReference type="PROSITE-ProRule" id="PRU01058"/>
    </source>
</evidence>
<evidence type="ECO:0000256" key="3">
    <source>
        <dbReference type="SAM" id="MobiDB-lite"/>
    </source>
</evidence>
<gene>
    <name evidence="1" type="primary">rsgA</name>
    <name type="ordered locus">Sde_2677</name>
</gene>
<sequence length="343" mass="37866">MAKRRLSKRQVDRIRERQSQRLDTSVAAPDGKQLGSEQAGLVIAHHGKQVQVETLDNSDDSPRRLRCHLRATLGSVVTGDRIVFQEDDSSGIIVAIQPRSSTLVRPDSYGKLKPVAANVDQLLITIACAPEPFSGLIDRYLAVAENLHIRPVLLFNKLDLLQSDEIDSAIANKVAKLRTLYTSLGYRCIDTCAKNGDGLDELRNTLQDNTSVFVGQSGVGKSSIIKKLLPDQEIAIGALSDAIDKGRHTTTHSELFHFPFGGDCIDSPGIREFGLWHLSPKEVTYGFIEIRDIAGLCKFRDCSHTHEPSCAVLNAVEDGSLHPERYENFQRIVQSLDDVNMQG</sequence>
<proteinExistence type="inferred from homology"/>
<name>RSGA_SACD2</name>
<organism>
    <name type="scientific">Saccharophagus degradans (strain 2-40 / ATCC 43961 / DSM 17024)</name>
    <dbReference type="NCBI Taxonomy" id="203122"/>
    <lineage>
        <taxon>Bacteria</taxon>
        <taxon>Pseudomonadati</taxon>
        <taxon>Pseudomonadota</taxon>
        <taxon>Gammaproteobacteria</taxon>
        <taxon>Cellvibrionales</taxon>
        <taxon>Cellvibrionaceae</taxon>
        <taxon>Saccharophagus</taxon>
    </lineage>
</organism>
<reference key="1">
    <citation type="journal article" date="2008" name="PLoS Genet.">
        <title>Complete genome sequence of the complex carbohydrate-degrading marine bacterium, Saccharophagus degradans strain 2-40 T.</title>
        <authorList>
            <person name="Weiner R.M."/>
            <person name="Taylor L.E. II"/>
            <person name="Henrissat B."/>
            <person name="Hauser L."/>
            <person name="Land M."/>
            <person name="Coutinho P.M."/>
            <person name="Rancurel C."/>
            <person name="Saunders E.H."/>
            <person name="Longmire A.G."/>
            <person name="Zhang H."/>
            <person name="Bayer E.A."/>
            <person name="Gilbert H.J."/>
            <person name="Larimer F."/>
            <person name="Zhulin I.B."/>
            <person name="Ekborg N.A."/>
            <person name="Lamed R."/>
            <person name="Richardson P.M."/>
            <person name="Borovok I."/>
            <person name="Hutcheson S."/>
        </authorList>
    </citation>
    <scope>NUCLEOTIDE SEQUENCE [LARGE SCALE GENOMIC DNA]</scope>
    <source>
        <strain>2-40 / ATCC 43961 / DSM 17024</strain>
    </source>
</reference>
<keyword id="KW-0963">Cytoplasm</keyword>
<keyword id="KW-0342">GTP-binding</keyword>
<keyword id="KW-0378">Hydrolase</keyword>
<keyword id="KW-0479">Metal-binding</keyword>
<keyword id="KW-0547">Nucleotide-binding</keyword>
<keyword id="KW-1185">Reference proteome</keyword>
<keyword id="KW-0690">Ribosome biogenesis</keyword>
<keyword id="KW-0694">RNA-binding</keyword>
<keyword id="KW-0699">rRNA-binding</keyword>
<keyword id="KW-0862">Zinc</keyword>
<protein>
    <recommendedName>
        <fullName evidence="1">Small ribosomal subunit biogenesis GTPase RsgA</fullName>
        <ecNumber evidence="1">3.6.1.-</ecNumber>
    </recommendedName>
</protein>
<dbReference type="EC" id="3.6.1.-" evidence="1"/>
<dbReference type="EMBL" id="CP000282">
    <property type="protein sequence ID" value="ABD81937.1"/>
    <property type="molecule type" value="Genomic_DNA"/>
</dbReference>
<dbReference type="RefSeq" id="WP_011469154.1">
    <property type="nucleotide sequence ID" value="NC_007912.1"/>
</dbReference>
<dbReference type="SMR" id="Q21H92"/>
<dbReference type="STRING" id="203122.Sde_2677"/>
<dbReference type="GeneID" id="98614335"/>
<dbReference type="KEGG" id="sde:Sde_2677"/>
<dbReference type="eggNOG" id="COG1162">
    <property type="taxonomic scope" value="Bacteria"/>
</dbReference>
<dbReference type="HOGENOM" id="CLU_033617_2_0_6"/>
<dbReference type="OrthoDB" id="9809485at2"/>
<dbReference type="Proteomes" id="UP000001947">
    <property type="component" value="Chromosome"/>
</dbReference>
<dbReference type="GO" id="GO:0005737">
    <property type="term" value="C:cytoplasm"/>
    <property type="evidence" value="ECO:0007669"/>
    <property type="project" value="UniProtKB-SubCell"/>
</dbReference>
<dbReference type="GO" id="GO:0005525">
    <property type="term" value="F:GTP binding"/>
    <property type="evidence" value="ECO:0007669"/>
    <property type="project" value="UniProtKB-UniRule"/>
</dbReference>
<dbReference type="GO" id="GO:0003924">
    <property type="term" value="F:GTPase activity"/>
    <property type="evidence" value="ECO:0007669"/>
    <property type="project" value="UniProtKB-UniRule"/>
</dbReference>
<dbReference type="GO" id="GO:0046872">
    <property type="term" value="F:metal ion binding"/>
    <property type="evidence" value="ECO:0007669"/>
    <property type="project" value="UniProtKB-KW"/>
</dbReference>
<dbReference type="GO" id="GO:0019843">
    <property type="term" value="F:rRNA binding"/>
    <property type="evidence" value="ECO:0007669"/>
    <property type="project" value="UniProtKB-KW"/>
</dbReference>
<dbReference type="GO" id="GO:0042274">
    <property type="term" value="P:ribosomal small subunit biogenesis"/>
    <property type="evidence" value="ECO:0007669"/>
    <property type="project" value="UniProtKB-UniRule"/>
</dbReference>
<dbReference type="CDD" id="cd01854">
    <property type="entry name" value="YjeQ_EngC"/>
    <property type="match status" value="1"/>
</dbReference>
<dbReference type="Gene3D" id="2.40.50.140">
    <property type="entry name" value="Nucleic acid-binding proteins"/>
    <property type="match status" value="1"/>
</dbReference>
<dbReference type="Gene3D" id="3.40.50.300">
    <property type="entry name" value="P-loop containing nucleotide triphosphate hydrolases"/>
    <property type="match status" value="1"/>
</dbReference>
<dbReference type="Gene3D" id="1.10.40.50">
    <property type="entry name" value="Probable gtpase engc, domain 3"/>
    <property type="match status" value="1"/>
</dbReference>
<dbReference type="HAMAP" id="MF_01820">
    <property type="entry name" value="GTPase_RsgA"/>
    <property type="match status" value="1"/>
</dbReference>
<dbReference type="InterPro" id="IPR030378">
    <property type="entry name" value="G_CP_dom"/>
</dbReference>
<dbReference type="InterPro" id="IPR012340">
    <property type="entry name" value="NA-bd_OB-fold"/>
</dbReference>
<dbReference type="InterPro" id="IPR027417">
    <property type="entry name" value="P-loop_NTPase"/>
</dbReference>
<dbReference type="InterPro" id="IPR004881">
    <property type="entry name" value="Ribosome_biogen_GTPase_RsgA"/>
</dbReference>
<dbReference type="InterPro" id="IPR010914">
    <property type="entry name" value="RsgA_GTPase_dom"/>
</dbReference>
<dbReference type="NCBIfam" id="NF008931">
    <property type="entry name" value="PRK12288.1"/>
    <property type="match status" value="1"/>
</dbReference>
<dbReference type="NCBIfam" id="TIGR00157">
    <property type="entry name" value="ribosome small subunit-dependent GTPase A"/>
    <property type="match status" value="1"/>
</dbReference>
<dbReference type="PANTHER" id="PTHR32120">
    <property type="entry name" value="SMALL RIBOSOMAL SUBUNIT BIOGENESIS GTPASE RSGA"/>
    <property type="match status" value="1"/>
</dbReference>
<dbReference type="PANTHER" id="PTHR32120:SF11">
    <property type="entry name" value="SMALL RIBOSOMAL SUBUNIT BIOGENESIS GTPASE RSGA 1, MITOCHONDRIAL-RELATED"/>
    <property type="match status" value="1"/>
</dbReference>
<dbReference type="Pfam" id="PF03193">
    <property type="entry name" value="RsgA_GTPase"/>
    <property type="match status" value="1"/>
</dbReference>
<dbReference type="SUPFAM" id="SSF52540">
    <property type="entry name" value="P-loop containing nucleoside triphosphate hydrolases"/>
    <property type="match status" value="1"/>
</dbReference>
<dbReference type="PROSITE" id="PS50936">
    <property type="entry name" value="ENGC_GTPASE"/>
    <property type="match status" value="1"/>
</dbReference>
<dbReference type="PROSITE" id="PS51721">
    <property type="entry name" value="G_CP"/>
    <property type="match status" value="1"/>
</dbReference>
<feature type="chain" id="PRO_1000188131" description="Small ribosomal subunit biogenesis GTPase RsgA">
    <location>
        <begin position="1"/>
        <end position="343"/>
    </location>
</feature>
<feature type="domain" description="CP-type G" evidence="2">
    <location>
        <begin position="109"/>
        <end position="273"/>
    </location>
</feature>
<feature type="region of interest" description="Disordered" evidence="3">
    <location>
        <begin position="1"/>
        <end position="32"/>
    </location>
</feature>
<feature type="compositionally biased region" description="Basic and acidic residues" evidence="3">
    <location>
        <begin position="9"/>
        <end position="20"/>
    </location>
</feature>
<feature type="binding site" evidence="1">
    <location>
        <begin position="156"/>
        <end position="159"/>
    </location>
    <ligand>
        <name>GTP</name>
        <dbReference type="ChEBI" id="CHEBI:37565"/>
    </ligand>
</feature>
<feature type="binding site" evidence="1">
    <location>
        <begin position="215"/>
        <end position="223"/>
    </location>
    <ligand>
        <name>GTP</name>
        <dbReference type="ChEBI" id="CHEBI:37565"/>
    </ligand>
</feature>
<feature type="binding site" evidence="1">
    <location>
        <position position="297"/>
    </location>
    <ligand>
        <name>Zn(2+)</name>
        <dbReference type="ChEBI" id="CHEBI:29105"/>
    </ligand>
</feature>
<feature type="binding site" evidence="1">
    <location>
        <position position="302"/>
    </location>
    <ligand>
        <name>Zn(2+)</name>
        <dbReference type="ChEBI" id="CHEBI:29105"/>
    </ligand>
</feature>
<feature type="binding site" evidence="1">
    <location>
        <position position="304"/>
    </location>
    <ligand>
        <name>Zn(2+)</name>
        <dbReference type="ChEBI" id="CHEBI:29105"/>
    </ligand>
</feature>
<feature type="binding site" evidence="1">
    <location>
        <position position="310"/>
    </location>
    <ligand>
        <name>Zn(2+)</name>
        <dbReference type="ChEBI" id="CHEBI:29105"/>
    </ligand>
</feature>